<sequence length="213" mass="23101">MIKLFVGLGNPGPDYDATRHNAGFWWIDGLARDLKVHLVPERAYHGLVARANVNGQSVWLLQPQTFMNLSGKSVAALARFFKIQPQEILVAHDELDILPGQAKLKRGGSHAGHNGLRDIHAQLGSPDYWRLRIGIGHPGVKAEVANWVLKKPSPDHRTLIEDSIAHSLKAAPAMLAGDMDKATLLVHTTKPPRPKPPRPAAAPVDAPAAPGDQ</sequence>
<reference key="1">
    <citation type="submission" date="2006-12" db="EMBL/GenBank/DDBJ databases">
        <title>Complete sequence of Acidovorax avenae subsp. citrulli AAC00-1.</title>
        <authorList>
            <person name="Copeland A."/>
            <person name="Lucas S."/>
            <person name="Lapidus A."/>
            <person name="Barry K."/>
            <person name="Detter J.C."/>
            <person name="Glavina del Rio T."/>
            <person name="Dalin E."/>
            <person name="Tice H."/>
            <person name="Pitluck S."/>
            <person name="Kiss H."/>
            <person name="Brettin T."/>
            <person name="Bruce D."/>
            <person name="Han C."/>
            <person name="Tapia R."/>
            <person name="Gilna P."/>
            <person name="Schmutz J."/>
            <person name="Larimer F."/>
            <person name="Land M."/>
            <person name="Hauser L."/>
            <person name="Kyrpides N."/>
            <person name="Kim E."/>
            <person name="Stahl D."/>
            <person name="Richardson P."/>
        </authorList>
    </citation>
    <scope>NUCLEOTIDE SEQUENCE [LARGE SCALE GENOMIC DNA]</scope>
    <source>
        <strain>AAC00-1</strain>
    </source>
</reference>
<protein>
    <recommendedName>
        <fullName evidence="1">Peptidyl-tRNA hydrolase</fullName>
        <shortName evidence="1">Pth</shortName>
        <ecNumber evidence="1">3.1.1.29</ecNumber>
    </recommendedName>
</protein>
<feature type="chain" id="PRO_1000010553" description="Peptidyl-tRNA hydrolase">
    <location>
        <begin position="1"/>
        <end position="213"/>
    </location>
</feature>
<feature type="region of interest" description="Disordered" evidence="2">
    <location>
        <begin position="187"/>
        <end position="213"/>
    </location>
</feature>
<feature type="compositionally biased region" description="Low complexity" evidence="2">
    <location>
        <begin position="201"/>
        <end position="213"/>
    </location>
</feature>
<feature type="active site" description="Proton acceptor" evidence="1">
    <location>
        <position position="20"/>
    </location>
</feature>
<feature type="binding site" evidence="1">
    <location>
        <position position="15"/>
    </location>
    <ligand>
        <name>tRNA</name>
        <dbReference type="ChEBI" id="CHEBI:17843"/>
    </ligand>
</feature>
<feature type="binding site" evidence="1">
    <location>
        <position position="66"/>
    </location>
    <ligand>
        <name>tRNA</name>
        <dbReference type="ChEBI" id="CHEBI:17843"/>
    </ligand>
</feature>
<feature type="binding site" evidence="1">
    <location>
        <position position="68"/>
    </location>
    <ligand>
        <name>tRNA</name>
        <dbReference type="ChEBI" id="CHEBI:17843"/>
    </ligand>
</feature>
<feature type="binding site" evidence="1">
    <location>
        <position position="114"/>
    </location>
    <ligand>
        <name>tRNA</name>
        <dbReference type="ChEBI" id="CHEBI:17843"/>
    </ligand>
</feature>
<feature type="site" description="Discriminates between blocked and unblocked aminoacyl-tRNA" evidence="1">
    <location>
        <position position="10"/>
    </location>
</feature>
<feature type="site" description="Stabilizes the basic form of H active site to accept a proton" evidence="1">
    <location>
        <position position="93"/>
    </location>
</feature>
<accession>A1TT75</accession>
<evidence type="ECO:0000255" key="1">
    <source>
        <dbReference type="HAMAP-Rule" id="MF_00083"/>
    </source>
</evidence>
<evidence type="ECO:0000256" key="2">
    <source>
        <dbReference type="SAM" id="MobiDB-lite"/>
    </source>
</evidence>
<comment type="function">
    <text evidence="1">Hydrolyzes ribosome-free peptidyl-tRNAs (with 1 or more amino acids incorporated), which drop off the ribosome during protein synthesis, or as a result of ribosome stalling.</text>
</comment>
<comment type="function">
    <text evidence="1">Catalyzes the release of premature peptidyl moieties from peptidyl-tRNA molecules trapped in stalled 50S ribosomal subunits, and thus maintains levels of free tRNAs and 50S ribosomes.</text>
</comment>
<comment type="catalytic activity">
    <reaction evidence="1">
        <text>an N-acyl-L-alpha-aminoacyl-tRNA + H2O = an N-acyl-L-amino acid + a tRNA + H(+)</text>
        <dbReference type="Rhea" id="RHEA:54448"/>
        <dbReference type="Rhea" id="RHEA-COMP:10123"/>
        <dbReference type="Rhea" id="RHEA-COMP:13883"/>
        <dbReference type="ChEBI" id="CHEBI:15377"/>
        <dbReference type="ChEBI" id="CHEBI:15378"/>
        <dbReference type="ChEBI" id="CHEBI:59874"/>
        <dbReference type="ChEBI" id="CHEBI:78442"/>
        <dbReference type="ChEBI" id="CHEBI:138191"/>
        <dbReference type="EC" id="3.1.1.29"/>
    </reaction>
</comment>
<comment type="subunit">
    <text evidence="1">Monomer.</text>
</comment>
<comment type="subcellular location">
    <subcellularLocation>
        <location evidence="1">Cytoplasm</location>
    </subcellularLocation>
</comment>
<comment type="similarity">
    <text evidence="1">Belongs to the PTH family.</text>
</comment>
<name>PTH_PARC0</name>
<proteinExistence type="inferred from homology"/>
<gene>
    <name evidence="1" type="primary">pth</name>
    <name type="ordered locus">Aave_3612</name>
</gene>
<organism>
    <name type="scientific">Paracidovorax citrulli (strain AAC00-1)</name>
    <name type="common">Acidovorax citrulli</name>
    <dbReference type="NCBI Taxonomy" id="397945"/>
    <lineage>
        <taxon>Bacteria</taxon>
        <taxon>Pseudomonadati</taxon>
        <taxon>Pseudomonadota</taxon>
        <taxon>Betaproteobacteria</taxon>
        <taxon>Burkholderiales</taxon>
        <taxon>Comamonadaceae</taxon>
        <taxon>Paracidovorax</taxon>
    </lineage>
</organism>
<keyword id="KW-0963">Cytoplasm</keyword>
<keyword id="KW-0378">Hydrolase</keyword>
<keyword id="KW-0694">RNA-binding</keyword>
<keyword id="KW-0820">tRNA-binding</keyword>
<dbReference type="EC" id="3.1.1.29" evidence="1"/>
<dbReference type="EMBL" id="CP000512">
    <property type="protein sequence ID" value="ABM34163.1"/>
    <property type="molecule type" value="Genomic_DNA"/>
</dbReference>
<dbReference type="RefSeq" id="WP_011796660.1">
    <property type="nucleotide sequence ID" value="NC_008752.1"/>
</dbReference>
<dbReference type="SMR" id="A1TT75"/>
<dbReference type="STRING" id="397945.Aave_3612"/>
<dbReference type="GeneID" id="79791497"/>
<dbReference type="KEGG" id="aav:Aave_3612"/>
<dbReference type="eggNOG" id="COG0193">
    <property type="taxonomic scope" value="Bacteria"/>
</dbReference>
<dbReference type="HOGENOM" id="CLU_062456_3_1_4"/>
<dbReference type="OrthoDB" id="9800507at2"/>
<dbReference type="Proteomes" id="UP000002596">
    <property type="component" value="Chromosome"/>
</dbReference>
<dbReference type="GO" id="GO:0005737">
    <property type="term" value="C:cytoplasm"/>
    <property type="evidence" value="ECO:0007669"/>
    <property type="project" value="UniProtKB-SubCell"/>
</dbReference>
<dbReference type="GO" id="GO:0004045">
    <property type="term" value="F:peptidyl-tRNA hydrolase activity"/>
    <property type="evidence" value="ECO:0007669"/>
    <property type="project" value="UniProtKB-UniRule"/>
</dbReference>
<dbReference type="GO" id="GO:0000049">
    <property type="term" value="F:tRNA binding"/>
    <property type="evidence" value="ECO:0007669"/>
    <property type="project" value="UniProtKB-UniRule"/>
</dbReference>
<dbReference type="GO" id="GO:0006515">
    <property type="term" value="P:protein quality control for misfolded or incompletely synthesized proteins"/>
    <property type="evidence" value="ECO:0007669"/>
    <property type="project" value="UniProtKB-UniRule"/>
</dbReference>
<dbReference type="GO" id="GO:0072344">
    <property type="term" value="P:rescue of stalled ribosome"/>
    <property type="evidence" value="ECO:0007669"/>
    <property type="project" value="UniProtKB-UniRule"/>
</dbReference>
<dbReference type="CDD" id="cd00462">
    <property type="entry name" value="PTH"/>
    <property type="match status" value="1"/>
</dbReference>
<dbReference type="FunFam" id="3.40.50.1470:FF:000001">
    <property type="entry name" value="Peptidyl-tRNA hydrolase"/>
    <property type="match status" value="1"/>
</dbReference>
<dbReference type="Gene3D" id="3.40.50.1470">
    <property type="entry name" value="Peptidyl-tRNA hydrolase"/>
    <property type="match status" value="1"/>
</dbReference>
<dbReference type="HAMAP" id="MF_00083">
    <property type="entry name" value="Pept_tRNA_hydro_bact"/>
    <property type="match status" value="1"/>
</dbReference>
<dbReference type="InterPro" id="IPR001328">
    <property type="entry name" value="Pept_tRNA_hydro"/>
</dbReference>
<dbReference type="InterPro" id="IPR018171">
    <property type="entry name" value="Pept_tRNA_hydro_CS"/>
</dbReference>
<dbReference type="InterPro" id="IPR036416">
    <property type="entry name" value="Pept_tRNA_hydro_sf"/>
</dbReference>
<dbReference type="NCBIfam" id="TIGR00447">
    <property type="entry name" value="pth"/>
    <property type="match status" value="1"/>
</dbReference>
<dbReference type="PANTHER" id="PTHR17224">
    <property type="entry name" value="PEPTIDYL-TRNA HYDROLASE"/>
    <property type="match status" value="1"/>
</dbReference>
<dbReference type="PANTHER" id="PTHR17224:SF1">
    <property type="entry name" value="PEPTIDYL-TRNA HYDROLASE"/>
    <property type="match status" value="1"/>
</dbReference>
<dbReference type="Pfam" id="PF01195">
    <property type="entry name" value="Pept_tRNA_hydro"/>
    <property type="match status" value="1"/>
</dbReference>
<dbReference type="SUPFAM" id="SSF53178">
    <property type="entry name" value="Peptidyl-tRNA hydrolase-like"/>
    <property type="match status" value="1"/>
</dbReference>
<dbReference type="PROSITE" id="PS01196">
    <property type="entry name" value="PEPT_TRNA_HYDROL_2"/>
    <property type="match status" value="1"/>
</dbReference>